<reference key="1">
    <citation type="journal article" date="2006" name="Proc. Natl. Acad. Sci. U.S.A.">
        <title>The complete genome sequence of a chronic atrophic gastritis Helicobacter pylori strain: evolution during disease progression.</title>
        <authorList>
            <person name="Oh J.D."/>
            <person name="Kling-Baeckhed H."/>
            <person name="Giannakis M."/>
            <person name="Xu J."/>
            <person name="Fulton R.S."/>
            <person name="Fulton L.A."/>
            <person name="Cordum H.S."/>
            <person name="Wang C."/>
            <person name="Elliott G."/>
            <person name="Edwards J."/>
            <person name="Mardis E.R."/>
            <person name="Engstrand L.G."/>
            <person name="Gordon J.I."/>
        </authorList>
    </citation>
    <scope>NUCLEOTIDE SEQUENCE [LARGE SCALE GENOMIC DNA]</scope>
    <source>
        <strain>HPAG1</strain>
    </source>
</reference>
<name>METN_HELPH</name>
<sequence>MVVELKNIEKIYENGFHALKGVNLELKKGDILGVIGYSGAGKSTLIRLINCLERPSSGEVLVNGVNLLNLKPKELQKARQKIGMIFQHFNLLSAKNVFENVAFALEIARWEKNKIKSRVHELLELVGLEDKMHFYPKQLSGGQKQRVAIARSLANCPDLLLCDEATSALDSKTTHSILTLLSGIQKKLDLSIVFITHEIEVVKELCNQMCVISSGEIVERGLVEEIFANPKHAVTKELLGIKNEHGDQKCQDVYRIVFLGEHLDEPIISNLIRRFKIDVSIISGNIEELTTKDIGYLVVRFLGSTTETQRALEYLNALGLQVEKLKD</sequence>
<organism>
    <name type="scientific">Helicobacter pylori (strain HPAG1)</name>
    <dbReference type="NCBI Taxonomy" id="357544"/>
    <lineage>
        <taxon>Bacteria</taxon>
        <taxon>Pseudomonadati</taxon>
        <taxon>Campylobacterota</taxon>
        <taxon>Epsilonproteobacteria</taxon>
        <taxon>Campylobacterales</taxon>
        <taxon>Helicobacteraceae</taxon>
        <taxon>Helicobacter</taxon>
    </lineage>
</organism>
<keyword id="KW-0029">Amino-acid transport</keyword>
<keyword id="KW-0067">ATP-binding</keyword>
<keyword id="KW-0997">Cell inner membrane</keyword>
<keyword id="KW-1003">Cell membrane</keyword>
<keyword id="KW-0472">Membrane</keyword>
<keyword id="KW-0547">Nucleotide-binding</keyword>
<keyword id="KW-1278">Translocase</keyword>
<keyword id="KW-0813">Transport</keyword>
<comment type="function">
    <text evidence="1">Part of the ABC transporter complex MetNIQ involved in methionine import. Responsible for energy coupling to the transport system.</text>
</comment>
<comment type="catalytic activity">
    <reaction evidence="1">
        <text>L-methionine(out) + ATP + H2O = L-methionine(in) + ADP + phosphate + H(+)</text>
        <dbReference type="Rhea" id="RHEA:29779"/>
        <dbReference type="ChEBI" id="CHEBI:15377"/>
        <dbReference type="ChEBI" id="CHEBI:15378"/>
        <dbReference type="ChEBI" id="CHEBI:30616"/>
        <dbReference type="ChEBI" id="CHEBI:43474"/>
        <dbReference type="ChEBI" id="CHEBI:57844"/>
        <dbReference type="ChEBI" id="CHEBI:456216"/>
        <dbReference type="EC" id="7.4.2.11"/>
    </reaction>
</comment>
<comment type="catalytic activity">
    <reaction evidence="1">
        <text>D-methionine(out) + ATP + H2O = D-methionine(in) + ADP + phosphate + H(+)</text>
        <dbReference type="Rhea" id="RHEA:29767"/>
        <dbReference type="ChEBI" id="CHEBI:15377"/>
        <dbReference type="ChEBI" id="CHEBI:15378"/>
        <dbReference type="ChEBI" id="CHEBI:30616"/>
        <dbReference type="ChEBI" id="CHEBI:43474"/>
        <dbReference type="ChEBI" id="CHEBI:57932"/>
        <dbReference type="ChEBI" id="CHEBI:456216"/>
        <dbReference type="EC" id="7.4.2.11"/>
    </reaction>
</comment>
<comment type="subunit">
    <text evidence="1">The complex is composed of two ATP-binding proteins (MetN), two transmembrane proteins (MetI) and a solute-binding protein (MetQ).</text>
</comment>
<comment type="subcellular location">
    <subcellularLocation>
        <location evidence="1">Cell inner membrane</location>
        <topology evidence="1">Peripheral membrane protein</topology>
    </subcellularLocation>
</comment>
<comment type="similarity">
    <text evidence="1">Belongs to the ABC transporter superfamily. Methionine importer (TC 3.A.1.24) family.</text>
</comment>
<dbReference type="EC" id="7.4.2.11" evidence="1"/>
<dbReference type="EMBL" id="CP000241">
    <property type="protein sequence ID" value="ABF85592.1"/>
    <property type="molecule type" value="Genomic_DNA"/>
</dbReference>
<dbReference type="RefSeq" id="WP_000259801.1">
    <property type="nucleotide sequence ID" value="NC_008086.1"/>
</dbReference>
<dbReference type="SMR" id="Q1CR30"/>
<dbReference type="KEGG" id="hpa:HPAG1_1525"/>
<dbReference type="HOGENOM" id="CLU_000604_1_3_7"/>
<dbReference type="GO" id="GO:0005886">
    <property type="term" value="C:plasma membrane"/>
    <property type="evidence" value="ECO:0007669"/>
    <property type="project" value="UniProtKB-SubCell"/>
</dbReference>
<dbReference type="GO" id="GO:0033232">
    <property type="term" value="F:ABC-type D-methionine transporter activity"/>
    <property type="evidence" value="ECO:0007669"/>
    <property type="project" value="UniProtKB-EC"/>
</dbReference>
<dbReference type="GO" id="GO:0005524">
    <property type="term" value="F:ATP binding"/>
    <property type="evidence" value="ECO:0007669"/>
    <property type="project" value="UniProtKB-KW"/>
</dbReference>
<dbReference type="GO" id="GO:0016887">
    <property type="term" value="F:ATP hydrolysis activity"/>
    <property type="evidence" value="ECO:0007669"/>
    <property type="project" value="InterPro"/>
</dbReference>
<dbReference type="CDD" id="cd03258">
    <property type="entry name" value="ABC_MetN_methionine_transporter"/>
    <property type="match status" value="1"/>
</dbReference>
<dbReference type="FunFam" id="3.40.50.300:FF:000056">
    <property type="entry name" value="Cell division ATP-binding protein FtsE"/>
    <property type="match status" value="1"/>
</dbReference>
<dbReference type="Gene3D" id="3.30.70.260">
    <property type="match status" value="1"/>
</dbReference>
<dbReference type="Gene3D" id="3.40.50.300">
    <property type="entry name" value="P-loop containing nucleotide triphosphate hydrolases"/>
    <property type="match status" value="1"/>
</dbReference>
<dbReference type="InterPro" id="IPR003593">
    <property type="entry name" value="AAA+_ATPase"/>
</dbReference>
<dbReference type="InterPro" id="IPR003439">
    <property type="entry name" value="ABC_transporter-like_ATP-bd"/>
</dbReference>
<dbReference type="InterPro" id="IPR017871">
    <property type="entry name" value="ABC_transporter-like_CS"/>
</dbReference>
<dbReference type="InterPro" id="IPR045865">
    <property type="entry name" value="ACT-like_dom_sf"/>
</dbReference>
<dbReference type="InterPro" id="IPR041701">
    <property type="entry name" value="MetN_ABC"/>
</dbReference>
<dbReference type="InterPro" id="IPR050086">
    <property type="entry name" value="MetN_ABC_transporter-like"/>
</dbReference>
<dbReference type="InterPro" id="IPR018449">
    <property type="entry name" value="NIL_domain"/>
</dbReference>
<dbReference type="InterPro" id="IPR027417">
    <property type="entry name" value="P-loop_NTPase"/>
</dbReference>
<dbReference type="PANTHER" id="PTHR43166">
    <property type="entry name" value="AMINO ACID IMPORT ATP-BINDING PROTEIN"/>
    <property type="match status" value="1"/>
</dbReference>
<dbReference type="PANTHER" id="PTHR43166:SF30">
    <property type="entry name" value="METHIONINE IMPORT ATP-BINDING PROTEIN METN"/>
    <property type="match status" value="1"/>
</dbReference>
<dbReference type="Pfam" id="PF00005">
    <property type="entry name" value="ABC_tran"/>
    <property type="match status" value="1"/>
</dbReference>
<dbReference type="Pfam" id="PF09383">
    <property type="entry name" value="NIL"/>
    <property type="match status" value="1"/>
</dbReference>
<dbReference type="SMART" id="SM00382">
    <property type="entry name" value="AAA"/>
    <property type="match status" value="1"/>
</dbReference>
<dbReference type="SMART" id="SM00930">
    <property type="entry name" value="NIL"/>
    <property type="match status" value="1"/>
</dbReference>
<dbReference type="SUPFAM" id="SSF55021">
    <property type="entry name" value="ACT-like"/>
    <property type="match status" value="1"/>
</dbReference>
<dbReference type="SUPFAM" id="SSF52540">
    <property type="entry name" value="P-loop containing nucleoside triphosphate hydrolases"/>
    <property type="match status" value="1"/>
</dbReference>
<dbReference type="PROSITE" id="PS00211">
    <property type="entry name" value="ABC_TRANSPORTER_1"/>
    <property type="match status" value="1"/>
</dbReference>
<dbReference type="PROSITE" id="PS50893">
    <property type="entry name" value="ABC_TRANSPORTER_2"/>
    <property type="match status" value="1"/>
</dbReference>
<dbReference type="PROSITE" id="PS51264">
    <property type="entry name" value="METN"/>
    <property type="match status" value="1"/>
</dbReference>
<protein>
    <recommendedName>
        <fullName evidence="1">Methionine import ATP-binding protein MetN</fullName>
        <ecNumber evidence="1">7.4.2.11</ecNumber>
    </recommendedName>
</protein>
<proteinExistence type="inferred from homology"/>
<evidence type="ECO:0000255" key="1">
    <source>
        <dbReference type="HAMAP-Rule" id="MF_01719"/>
    </source>
</evidence>
<gene>
    <name evidence="1" type="primary">metN</name>
    <name type="ordered locus">HPAG1_1525</name>
</gene>
<accession>Q1CR30</accession>
<feature type="chain" id="PRO_0000270311" description="Methionine import ATP-binding protein MetN">
    <location>
        <begin position="1"/>
        <end position="327"/>
    </location>
</feature>
<feature type="domain" description="ABC transporter" evidence="1">
    <location>
        <begin position="3"/>
        <end position="239"/>
    </location>
</feature>
<feature type="binding site" evidence="1">
    <location>
        <begin position="36"/>
        <end position="43"/>
    </location>
    <ligand>
        <name>ATP</name>
        <dbReference type="ChEBI" id="CHEBI:30616"/>
    </ligand>
</feature>